<reference key="1">
    <citation type="submission" date="2007-11" db="EMBL/GenBank/DDBJ databases">
        <title>Complete genome sequence of Clostridium phytofermentans ISDg.</title>
        <authorList>
            <person name="Leschine S.B."/>
            <person name="Warnick T.A."/>
            <person name="Blanchard J.L."/>
            <person name="Schnell D.J."/>
            <person name="Petit E.L."/>
            <person name="LaTouf W.G."/>
            <person name="Copeland A."/>
            <person name="Lucas S."/>
            <person name="Lapidus A."/>
            <person name="Barry K."/>
            <person name="Glavina del Rio T."/>
            <person name="Dalin E."/>
            <person name="Tice H."/>
            <person name="Pitluck S."/>
            <person name="Kiss H."/>
            <person name="Brettin T."/>
            <person name="Bruce D."/>
            <person name="Detter J.C."/>
            <person name="Han C."/>
            <person name="Kuske C."/>
            <person name="Schmutz J."/>
            <person name="Larimer F."/>
            <person name="Land M."/>
            <person name="Hauser L."/>
            <person name="Kyrpides N."/>
            <person name="Kim E.A."/>
            <person name="Richardson P."/>
        </authorList>
    </citation>
    <scope>NUCLEOTIDE SEQUENCE [LARGE SCALE GENOMIC DNA]</scope>
    <source>
        <strain>ATCC 700394 / DSM 18823 / ISDg</strain>
    </source>
</reference>
<dbReference type="EC" id="3.6.-.-" evidence="1"/>
<dbReference type="EMBL" id="CP000885">
    <property type="protein sequence ID" value="ABX44288.1"/>
    <property type="molecule type" value="Genomic_DNA"/>
</dbReference>
<dbReference type="RefSeq" id="WP_012201935.1">
    <property type="nucleotide sequence ID" value="NC_010001.1"/>
</dbReference>
<dbReference type="SMR" id="A9KLX9"/>
<dbReference type="STRING" id="357809.Cphy_3941"/>
<dbReference type="KEGG" id="cpy:Cphy_3941"/>
<dbReference type="eggNOG" id="COG0486">
    <property type="taxonomic scope" value="Bacteria"/>
</dbReference>
<dbReference type="HOGENOM" id="CLU_019624_4_1_9"/>
<dbReference type="OrthoDB" id="9805918at2"/>
<dbReference type="Proteomes" id="UP000000370">
    <property type="component" value="Chromosome"/>
</dbReference>
<dbReference type="GO" id="GO:0005829">
    <property type="term" value="C:cytosol"/>
    <property type="evidence" value="ECO:0007669"/>
    <property type="project" value="TreeGrafter"/>
</dbReference>
<dbReference type="GO" id="GO:0005525">
    <property type="term" value="F:GTP binding"/>
    <property type="evidence" value="ECO:0007669"/>
    <property type="project" value="UniProtKB-UniRule"/>
</dbReference>
<dbReference type="GO" id="GO:0003924">
    <property type="term" value="F:GTPase activity"/>
    <property type="evidence" value="ECO:0007669"/>
    <property type="project" value="UniProtKB-UniRule"/>
</dbReference>
<dbReference type="GO" id="GO:0046872">
    <property type="term" value="F:metal ion binding"/>
    <property type="evidence" value="ECO:0007669"/>
    <property type="project" value="UniProtKB-KW"/>
</dbReference>
<dbReference type="GO" id="GO:0030488">
    <property type="term" value="P:tRNA methylation"/>
    <property type="evidence" value="ECO:0007669"/>
    <property type="project" value="TreeGrafter"/>
</dbReference>
<dbReference type="GO" id="GO:0002098">
    <property type="term" value="P:tRNA wobble uridine modification"/>
    <property type="evidence" value="ECO:0007669"/>
    <property type="project" value="TreeGrafter"/>
</dbReference>
<dbReference type="CDD" id="cd04164">
    <property type="entry name" value="trmE"/>
    <property type="match status" value="1"/>
</dbReference>
<dbReference type="CDD" id="cd14858">
    <property type="entry name" value="TrmE_N"/>
    <property type="match status" value="1"/>
</dbReference>
<dbReference type="FunFam" id="3.30.1360.120:FF:000003">
    <property type="entry name" value="tRNA modification GTPase MnmE"/>
    <property type="match status" value="1"/>
</dbReference>
<dbReference type="FunFam" id="3.40.50.300:FF:000494">
    <property type="entry name" value="tRNA modification GTPase MnmE"/>
    <property type="match status" value="1"/>
</dbReference>
<dbReference type="Gene3D" id="3.40.50.300">
    <property type="entry name" value="P-loop containing nucleotide triphosphate hydrolases"/>
    <property type="match status" value="1"/>
</dbReference>
<dbReference type="Gene3D" id="3.30.1360.120">
    <property type="entry name" value="Probable tRNA modification gtpase trme, domain 1"/>
    <property type="match status" value="1"/>
</dbReference>
<dbReference type="Gene3D" id="1.20.120.430">
    <property type="entry name" value="tRNA modification GTPase MnmE domain 2"/>
    <property type="match status" value="1"/>
</dbReference>
<dbReference type="HAMAP" id="MF_00379">
    <property type="entry name" value="GTPase_MnmE"/>
    <property type="match status" value="1"/>
</dbReference>
<dbReference type="InterPro" id="IPR031168">
    <property type="entry name" value="G_TrmE"/>
</dbReference>
<dbReference type="InterPro" id="IPR006073">
    <property type="entry name" value="GTP-bd"/>
</dbReference>
<dbReference type="InterPro" id="IPR018948">
    <property type="entry name" value="GTP-bd_TrmE_N"/>
</dbReference>
<dbReference type="InterPro" id="IPR004520">
    <property type="entry name" value="GTPase_MnmE"/>
</dbReference>
<dbReference type="InterPro" id="IPR027368">
    <property type="entry name" value="MnmE_dom2"/>
</dbReference>
<dbReference type="InterPro" id="IPR025867">
    <property type="entry name" value="MnmE_helical"/>
</dbReference>
<dbReference type="InterPro" id="IPR027417">
    <property type="entry name" value="P-loop_NTPase"/>
</dbReference>
<dbReference type="InterPro" id="IPR005225">
    <property type="entry name" value="Small_GTP-bd"/>
</dbReference>
<dbReference type="InterPro" id="IPR027266">
    <property type="entry name" value="TrmE/GcvT_dom1"/>
</dbReference>
<dbReference type="NCBIfam" id="TIGR00450">
    <property type="entry name" value="mnmE_trmE_thdF"/>
    <property type="match status" value="1"/>
</dbReference>
<dbReference type="NCBIfam" id="TIGR00231">
    <property type="entry name" value="small_GTP"/>
    <property type="match status" value="1"/>
</dbReference>
<dbReference type="PANTHER" id="PTHR42714">
    <property type="entry name" value="TRNA MODIFICATION GTPASE GTPBP3"/>
    <property type="match status" value="1"/>
</dbReference>
<dbReference type="PANTHER" id="PTHR42714:SF2">
    <property type="entry name" value="TRNA MODIFICATION GTPASE GTPBP3, MITOCHONDRIAL"/>
    <property type="match status" value="1"/>
</dbReference>
<dbReference type="Pfam" id="PF01926">
    <property type="entry name" value="MMR_HSR1"/>
    <property type="match status" value="1"/>
</dbReference>
<dbReference type="Pfam" id="PF12631">
    <property type="entry name" value="MnmE_helical"/>
    <property type="match status" value="1"/>
</dbReference>
<dbReference type="Pfam" id="PF10396">
    <property type="entry name" value="TrmE_N"/>
    <property type="match status" value="1"/>
</dbReference>
<dbReference type="PRINTS" id="PR00326">
    <property type="entry name" value="GTP1OBG"/>
</dbReference>
<dbReference type="SUPFAM" id="SSF52540">
    <property type="entry name" value="P-loop containing nucleoside triphosphate hydrolases"/>
    <property type="match status" value="1"/>
</dbReference>
<dbReference type="SUPFAM" id="SSF116878">
    <property type="entry name" value="TrmE connector domain"/>
    <property type="match status" value="1"/>
</dbReference>
<dbReference type="PROSITE" id="PS51709">
    <property type="entry name" value="G_TRME"/>
    <property type="match status" value="1"/>
</dbReference>
<name>MNME_LACP7</name>
<feature type="chain" id="PRO_1000080004" description="tRNA modification GTPase MnmE">
    <location>
        <begin position="1"/>
        <end position="458"/>
    </location>
</feature>
<feature type="domain" description="TrmE-type G">
    <location>
        <begin position="221"/>
        <end position="379"/>
    </location>
</feature>
<feature type="binding site" evidence="1">
    <location>
        <position position="22"/>
    </location>
    <ligand>
        <name>(6S)-5-formyl-5,6,7,8-tetrahydrofolate</name>
        <dbReference type="ChEBI" id="CHEBI:57457"/>
    </ligand>
</feature>
<feature type="binding site" evidence="1">
    <location>
        <position position="86"/>
    </location>
    <ligand>
        <name>(6S)-5-formyl-5,6,7,8-tetrahydrofolate</name>
        <dbReference type="ChEBI" id="CHEBI:57457"/>
    </ligand>
</feature>
<feature type="binding site" evidence="1">
    <location>
        <position position="125"/>
    </location>
    <ligand>
        <name>(6S)-5-formyl-5,6,7,8-tetrahydrofolate</name>
        <dbReference type="ChEBI" id="CHEBI:57457"/>
    </ligand>
</feature>
<feature type="binding site" evidence="1">
    <location>
        <begin position="231"/>
        <end position="236"/>
    </location>
    <ligand>
        <name>GTP</name>
        <dbReference type="ChEBI" id="CHEBI:37565"/>
    </ligand>
</feature>
<feature type="binding site" evidence="1">
    <location>
        <position position="231"/>
    </location>
    <ligand>
        <name>K(+)</name>
        <dbReference type="ChEBI" id="CHEBI:29103"/>
    </ligand>
</feature>
<feature type="binding site" evidence="1">
    <location>
        <position position="235"/>
    </location>
    <ligand>
        <name>Mg(2+)</name>
        <dbReference type="ChEBI" id="CHEBI:18420"/>
    </ligand>
</feature>
<feature type="binding site" evidence="1">
    <location>
        <begin position="250"/>
        <end position="256"/>
    </location>
    <ligand>
        <name>GTP</name>
        <dbReference type="ChEBI" id="CHEBI:37565"/>
    </ligand>
</feature>
<feature type="binding site" evidence="1">
    <location>
        <position position="250"/>
    </location>
    <ligand>
        <name>K(+)</name>
        <dbReference type="ChEBI" id="CHEBI:29103"/>
    </ligand>
</feature>
<feature type="binding site" evidence="1">
    <location>
        <position position="252"/>
    </location>
    <ligand>
        <name>K(+)</name>
        <dbReference type="ChEBI" id="CHEBI:29103"/>
    </ligand>
</feature>
<feature type="binding site" evidence="1">
    <location>
        <position position="255"/>
    </location>
    <ligand>
        <name>K(+)</name>
        <dbReference type="ChEBI" id="CHEBI:29103"/>
    </ligand>
</feature>
<feature type="binding site" evidence="1">
    <location>
        <position position="256"/>
    </location>
    <ligand>
        <name>Mg(2+)</name>
        <dbReference type="ChEBI" id="CHEBI:18420"/>
    </ligand>
</feature>
<feature type="binding site" evidence="1">
    <location>
        <begin position="275"/>
        <end position="278"/>
    </location>
    <ligand>
        <name>GTP</name>
        <dbReference type="ChEBI" id="CHEBI:37565"/>
    </ligand>
</feature>
<feature type="binding site" evidence="1">
    <location>
        <position position="458"/>
    </location>
    <ligand>
        <name>(6S)-5-formyl-5,6,7,8-tetrahydrofolate</name>
        <dbReference type="ChEBI" id="CHEBI:57457"/>
    </ligand>
</feature>
<organism>
    <name type="scientific">Lachnoclostridium phytofermentans (strain ATCC 700394 / DSM 18823 / ISDg)</name>
    <name type="common">Clostridium phytofermentans</name>
    <dbReference type="NCBI Taxonomy" id="357809"/>
    <lineage>
        <taxon>Bacteria</taxon>
        <taxon>Bacillati</taxon>
        <taxon>Bacillota</taxon>
        <taxon>Clostridia</taxon>
        <taxon>Lachnospirales</taxon>
        <taxon>Lachnospiraceae</taxon>
    </lineage>
</organism>
<accession>A9KLX9</accession>
<evidence type="ECO:0000255" key="1">
    <source>
        <dbReference type="HAMAP-Rule" id="MF_00379"/>
    </source>
</evidence>
<keyword id="KW-0963">Cytoplasm</keyword>
<keyword id="KW-0342">GTP-binding</keyword>
<keyword id="KW-0378">Hydrolase</keyword>
<keyword id="KW-0460">Magnesium</keyword>
<keyword id="KW-0479">Metal-binding</keyword>
<keyword id="KW-0547">Nucleotide-binding</keyword>
<keyword id="KW-0630">Potassium</keyword>
<keyword id="KW-1185">Reference proteome</keyword>
<keyword id="KW-0819">tRNA processing</keyword>
<protein>
    <recommendedName>
        <fullName evidence="1">tRNA modification GTPase MnmE</fullName>
        <ecNumber evidence="1">3.6.-.-</ecNumber>
    </recommendedName>
</protein>
<proteinExistence type="inferred from homology"/>
<gene>
    <name evidence="1" type="primary">mnmE</name>
    <name evidence="1" type="synonym">trmE</name>
    <name type="ordered locus">Cphy_3941</name>
</gene>
<sequence length="458" mass="50743">MKTDTIAAIATGLSNAGISIVRISGDQAFAVIDKIFQTKSKAKRLSEMDSHTVHYGYIVDEEEIIDEVMVIIMRAPRSYTMEDSIEIDCHGGITVTKKVLEAVLKAGARIAEPGEFTKRAFLNGRIDLSQAEAVIDVIHANNELALKNSMKQLKGNVLHKVKDVRHSIILDTAYIEAALDDPEHISLEGFSDKLRDNVIGSIKELSELINTSENGRMIKEGIRTVILGRPNAGKSSLLNLMVGEERAIVTEIAGTTRDTIEETVFLNGLCLNLIDTAGIRETSDLVEKLGVEKSLKSAKEADLIICVIDASTPLNQDDKEILEFIKDRKAIVLLNKSDLDSVIEEEKINLLTNKPILKISAIDQTGIKDLEQTITEMFFEGNISFNDEIYITNMRHKNALVEAKVSLEQVIVSIENEMPEDFFSIDLMNAYEILGTIIGESVDEDLVNTIFKEFCMGK</sequence>
<comment type="function">
    <text evidence="1">Exhibits a very high intrinsic GTPase hydrolysis rate. Involved in the addition of a carboxymethylaminomethyl (cmnm) group at the wobble position (U34) of certain tRNAs, forming tRNA-cmnm(5)s(2)U34.</text>
</comment>
<comment type="cofactor">
    <cofactor evidence="1">
        <name>K(+)</name>
        <dbReference type="ChEBI" id="CHEBI:29103"/>
    </cofactor>
    <text evidence="1">Binds 1 potassium ion per subunit.</text>
</comment>
<comment type="subunit">
    <text evidence="1">Homodimer. Heterotetramer of two MnmE and two MnmG subunits.</text>
</comment>
<comment type="subcellular location">
    <subcellularLocation>
        <location evidence="1">Cytoplasm</location>
    </subcellularLocation>
</comment>
<comment type="similarity">
    <text evidence="1">Belongs to the TRAFAC class TrmE-Era-EngA-EngB-Septin-like GTPase superfamily. TrmE GTPase family.</text>
</comment>